<protein>
    <recommendedName>
        <fullName>Coiled-coil domain-containing protein 167</fullName>
    </recommendedName>
</protein>
<name>CC167_BOVIN</name>
<comment type="subcellular location">
    <subcellularLocation>
        <location evidence="2">Membrane</location>
        <topology evidence="2">Single-pass membrane protein</topology>
    </subcellularLocation>
</comment>
<organism>
    <name type="scientific">Bos taurus</name>
    <name type="common">Bovine</name>
    <dbReference type="NCBI Taxonomy" id="9913"/>
    <lineage>
        <taxon>Eukaryota</taxon>
        <taxon>Metazoa</taxon>
        <taxon>Chordata</taxon>
        <taxon>Craniata</taxon>
        <taxon>Vertebrata</taxon>
        <taxon>Euteleostomi</taxon>
        <taxon>Mammalia</taxon>
        <taxon>Eutheria</taxon>
        <taxon>Laurasiatheria</taxon>
        <taxon>Artiodactyla</taxon>
        <taxon>Ruminantia</taxon>
        <taxon>Pecora</taxon>
        <taxon>Bovidae</taxon>
        <taxon>Bovinae</taxon>
        <taxon>Bos</taxon>
    </lineage>
</organism>
<keyword id="KW-0175">Coiled coil</keyword>
<keyword id="KW-0472">Membrane</keyword>
<keyword id="KW-1185">Reference proteome</keyword>
<keyword id="KW-0812">Transmembrane</keyword>
<keyword id="KW-1133">Transmembrane helix</keyword>
<accession>A1A4P9</accession>
<proteinExistence type="predicted"/>
<sequence>MTKKKRENLGVALEIDGLEKKLSQCRRDLEVVNSRLCGVELSSEARRSLEKEKSSLMNKASNYEKELKLLRQENRKNMLLSVAIFLLLTVIYAYWAL</sequence>
<evidence type="ECO:0000255" key="1"/>
<evidence type="ECO:0000305" key="2"/>
<reference key="1">
    <citation type="submission" date="2006-10" db="EMBL/GenBank/DDBJ databases">
        <authorList>
            <consortium name="NIH - Mammalian Gene Collection (MGC) project"/>
        </authorList>
    </citation>
    <scope>NUCLEOTIDE SEQUENCE [LARGE SCALE MRNA]</scope>
    <source>
        <strain>Hereford</strain>
        <tissue>Fetal medulla</tissue>
    </source>
</reference>
<dbReference type="EMBL" id="BC126796">
    <property type="protein sequence ID" value="AAI26797.1"/>
    <property type="molecule type" value="mRNA"/>
</dbReference>
<dbReference type="RefSeq" id="NP_001073705.1">
    <property type="nucleotide sequence ID" value="NM_001080236.2"/>
</dbReference>
<dbReference type="SMR" id="A1A4P9"/>
<dbReference type="FunCoup" id="A1A4P9">
    <property type="interactions" value="714"/>
</dbReference>
<dbReference type="STRING" id="9913.ENSBTAP00000016009"/>
<dbReference type="PaxDb" id="9913-ENSBTAP00000016009"/>
<dbReference type="GeneID" id="507353"/>
<dbReference type="KEGG" id="bta:507353"/>
<dbReference type="CTD" id="154467"/>
<dbReference type="VEuPathDB" id="HostDB:ENSBTAG00000012069"/>
<dbReference type="eggNOG" id="ENOG502SAF4">
    <property type="taxonomic scope" value="Eukaryota"/>
</dbReference>
<dbReference type="HOGENOM" id="CLU_152032_0_0_1"/>
<dbReference type="InParanoid" id="A1A4P9"/>
<dbReference type="OMA" id="MAIMNER"/>
<dbReference type="OrthoDB" id="6435278at2759"/>
<dbReference type="TreeFam" id="TF336097"/>
<dbReference type="Proteomes" id="UP000009136">
    <property type="component" value="Chromosome 23"/>
</dbReference>
<dbReference type="Bgee" id="ENSBTAG00000012069">
    <property type="expression patterns" value="Expressed in semen and 105 other cell types or tissues"/>
</dbReference>
<dbReference type="GO" id="GO:0016020">
    <property type="term" value="C:membrane"/>
    <property type="evidence" value="ECO:0007669"/>
    <property type="project" value="UniProtKB-SubCell"/>
</dbReference>
<dbReference type="InterPro" id="IPR028194">
    <property type="entry name" value="CCDC-167"/>
</dbReference>
<dbReference type="PANTHER" id="PTHR31759">
    <property type="entry name" value="COILED-COIL DOMAIN-CONTAINING PROTEIN 167"/>
    <property type="match status" value="1"/>
</dbReference>
<dbReference type="PANTHER" id="PTHR31759:SF1">
    <property type="entry name" value="COILED-COIL DOMAIN-CONTAINING PROTEIN 167"/>
    <property type="match status" value="1"/>
</dbReference>
<dbReference type="Pfam" id="PF15188">
    <property type="entry name" value="CCDC-167"/>
    <property type="match status" value="1"/>
</dbReference>
<feature type="chain" id="PRO_0000308549" description="Coiled-coil domain-containing protein 167">
    <location>
        <begin position="1"/>
        <end position="97"/>
    </location>
</feature>
<feature type="transmembrane region" description="Helical" evidence="1">
    <location>
        <begin position="77"/>
        <end position="97"/>
    </location>
</feature>
<feature type="coiled-coil region" evidence="1">
    <location>
        <begin position="10"/>
        <end position="79"/>
    </location>
</feature>
<gene>
    <name type="primary">CCDC167</name>
</gene>